<feature type="chain" id="PRO_1000203221" description="Phosphoribosylaminoimidazole-succinocarboxamide synthase">
    <location>
        <begin position="1"/>
        <end position="236"/>
    </location>
</feature>
<keyword id="KW-0067">ATP-binding</keyword>
<keyword id="KW-0436">Ligase</keyword>
<keyword id="KW-0547">Nucleotide-binding</keyword>
<keyword id="KW-0658">Purine biosynthesis</keyword>
<keyword id="KW-1185">Reference proteome</keyword>
<reference key="1">
    <citation type="journal article" date="2011" name="PLoS ONE">
        <title>The genome of Akkermansia muciniphila, a dedicated intestinal mucin degrader, and its use in exploring intestinal metagenomes.</title>
        <authorList>
            <person name="van Passel M.W."/>
            <person name="Kant R."/>
            <person name="Zoetendal E.G."/>
            <person name="Plugge C.M."/>
            <person name="Derrien M."/>
            <person name="Malfatti S.A."/>
            <person name="Chain P.S."/>
            <person name="Woyke T."/>
            <person name="Palva A."/>
            <person name="de Vos W.M."/>
            <person name="Smidt H."/>
        </authorList>
    </citation>
    <scope>NUCLEOTIDE SEQUENCE [LARGE SCALE GENOMIC DNA]</scope>
    <source>
        <strain>ATCC BAA-835 / DSM 22959 / JCM 33894 / BCRC 81048 / CCUG 64013 / CIP 107961 / Muc</strain>
    </source>
</reference>
<gene>
    <name evidence="1" type="primary">purC</name>
    <name type="ordered locus">Amuc_0532</name>
</gene>
<protein>
    <recommendedName>
        <fullName evidence="1">Phosphoribosylaminoimidazole-succinocarboxamide synthase</fullName>
        <ecNumber evidence="1">6.3.2.6</ecNumber>
    </recommendedName>
    <alternativeName>
        <fullName evidence="1">SAICAR synthetase</fullName>
    </alternativeName>
</protein>
<accession>B2UP00</accession>
<organism>
    <name type="scientific">Akkermansia muciniphila (strain ATCC BAA-835 / DSM 22959 / JCM 33894 / BCRC 81048 / CCUG 64013 / CIP 107961 / Muc)</name>
    <dbReference type="NCBI Taxonomy" id="349741"/>
    <lineage>
        <taxon>Bacteria</taxon>
        <taxon>Pseudomonadati</taxon>
        <taxon>Verrucomicrobiota</taxon>
        <taxon>Verrucomicrobiia</taxon>
        <taxon>Verrucomicrobiales</taxon>
        <taxon>Akkermansiaceae</taxon>
        <taxon>Akkermansia</taxon>
    </lineage>
</organism>
<proteinExistence type="inferred from homology"/>
<dbReference type="EC" id="6.3.2.6" evidence="1"/>
<dbReference type="EMBL" id="CP001071">
    <property type="protein sequence ID" value="ACD04370.1"/>
    <property type="molecule type" value="Genomic_DNA"/>
</dbReference>
<dbReference type="RefSeq" id="WP_012419585.1">
    <property type="nucleotide sequence ID" value="NZ_CP071807.1"/>
</dbReference>
<dbReference type="SMR" id="B2UP00"/>
<dbReference type="STRING" id="349741.Amuc_0532"/>
<dbReference type="PaxDb" id="349741-Amuc_0532"/>
<dbReference type="GeneID" id="60880002"/>
<dbReference type="KEGG" id="amu:Amuc_0532"/>
<dbReference type="eggNOG" id="COG0152">
    <property type="taxonomic scope" value="Bacteria"/>
</dbReference>
<dbReference type="HOGENOM" id="CLU_061495_2_0_0"/>
<dbReference type="OrthoDB" id="9815425at2"/>
<dbReference type="BioCyc" id="AMUC349741:G1GBX-583-MONOMER"/>
<dbReference type="UniPathway" id="UPA00074">
    <property type="reaction ID" value="UER00131"/>
</dbReference>
<dbReference type="Proteomes" id="UP000001031">
    <property type="component" value="Chromosome"/>
</dbReference>
<dbReference type="GO" id="GO:0005524">
    <property type="term" value="F:ATP binding"/>
    <property type="evidence" value="ECO:0007669"/>
    <property type="project" value="UniProtKB-KW"/>
</dbReference>
<dbReference type="GO" id="GO:0004639">
    <property type="term" value="F:phosphoribosylaminoimidazolesuccinocarboxamide synthase activity"/>
    <property type="evidence" value="ECO:0007669"/>
    <property type="project" value="UniProtKB-UniRule"/>
</dbReference>
<dbReference type="GO" id="GO:0006189">
    <property type="term" value="P:'de novo' IMP biosynthetic process"/>
    <property type="evidence" value="ECO:0007669"/>
    <property type="project" value="UniProtKB-UniRule"/>
</dbReference>
<dbReference type="GO" id="GO:0009236">
    <property type="term" value="P:cobalamin biosynthetic process"/>
    <property type="evidence" value="ECO:0007669"/>
    <property type="project" value="InterPro"/>
</dbReference>
<dbReference type="CDD" id="cd01415">
    <property type="entry name" value="SAICAR_synt_PurC"/>
    <property type="match status" value="1"/>
</dbReference>
<dbReference type="FunFam" id="3.30.470.20:FF:000006">
    <property type="entry name" value="Phosphoribosylaminoimidazole-succinocarboxamide synthase"/>
    <property type="match status" value="1"/>
</dbReference>
<dbReference type="Gene3D" id="3.30.470.20">
    <property type="entry name" value="ATP-grasp fold, B domain"/>
    <property type="match status" value="1"/>
</dbReference>
<dbReference type="Gene3D" id="3.30.200.20">
    <property type="entry name" value="Phosphorylase Kinase, domain 1"/>
    <property type="match status" value="1"/>
</dbReference>
<dbReference type="HAMAP" id="MF_00137">
    <property type="entry name" value="SAICAR_synth"/>
    <property type="match status" value="1"/>
</dbReference>
<dbReference type="InterPro" id="IPR028923">
    <property type="entry name" value="SAICAR_synt/ADE2_N"/>
</dbReference>
<dbReference type="InterPro" id="IPR033934">
    <property type="entry name" value="SAICAR_synt_PurC"/>
</dbReference>
<dbReference type="InterPro" id="IPR001636">
    <property type="entry name" value="SAICAR_synth"/>
</dbReference>
<dbReference type="InterPro" id="IPR050089">
    <property type="entry name" value="SAICAR_synthetase"/>
</dbReference>
<dbReference type="InterPro" id="IPR018236">
    <property type="entry name" value="SAICAR_synthetase_CS"/>
</dbReference>
<dbReference type="NCBIfam" id="TIGR00081">
    <property type="entry name" value="purC"/>
    <property type="match status" value="1"/>
</dbReference>
<dbReference type="PANTHER" id="PTHR43599">
    <property type="entry name" value="MULTIFUNCTIONAL PROTEIN ADE2"/>
    <property type="match status" value="1"/>
</dbReference>
<dbReference type="PANTHER" id="PTHR43599:SF3">
    <property type="entry name" value="SI:DKEY-6E2.2"/>
    <property type="match status" value="1"/>
</dbReference>
<dbReference type="Pfam" id="PF01259">
    <property type="entry name" value="SAICAR_synt"/>
    <property type="match status" value="1"/>
</dbReference>
<dbReference type="SUPFAM" id="SSF56104">
    <property type="entry name" value="SAICAR synthase-like"/>
    <property type="match status" value="1"/>
</dbReference>
<dbReference type="PROSITE" id="PS01057">
    <property type="entry name" value="SAICAR_SYNTHETASE_1"/>
    <property type="match status" value="1"/>
</dbReference>
<dbReference type="PROSITE" id="PS01058">
    <property type="entry name" value="SAICAR_SYNTHETASE_2"/>
    <property type="match status" value="1"/>
</dbReference>
<evidence type="ECO:0000255" key="1">
    <source>
        <dbReference type="HAMAP-Rule" id="MF_00137"/>
    </source>
</evidence>
<name>PUR7_AKKM8</name>
<comment type="catalytic activity">
    <reaction evidence="1">
        <text>5-amino-1-(5-phospho-D-ribosyl)imidazole-4-carboxylate + L-aspartate + ATP = (2S)-2-[5-amino-1-(5-phospho-beta-D-ribosyl)imidazole-4-carboxamido]succinate + ADP + phosphate + 2 H(+)</text>
        <dbReference type="Rhea" id="RHEA:22628"/>
        <dbReference type="ChEBI" id="CHEBI:15378"/>
        <dbReference type="ChEBI" id="CHEBI:29991"/>
        <dbReference type="ChEBI" id="CHEBI:30616"/>
        <dbReference type="ChEBI" id="CHEBI:43474"/>
        <dbReference type="ChEBI" id="CHEBI:58443"/>
        <dbReference type="ChEBI" id="CHEBI:77657"/>
        <dbReference type="ChEBI" id="CHEBI:456216"/>
        <dbReference type="EC" id="6.3.2.6"/>
    </reaction>
</comment>
<comment type="pathway">
    <text evidence="1">Purine metabolism; IMP biosynthesis via de novo pathway; 5-amino-1-(5-phospho-D-ribosyl)imidazole-4-carboxamide from 5-amino-1-(5-phospho-D-ribosyl)imidazole-4-carboxylate: step 1/2.</text>
</comment>
<comment type="similarity">
    <text evidence="1">Belongs to the SAICAR synthetase family.</text>
</comment>
<sequence length="236" mass="26855">MEPIYEGKAKRLYTTDNPNVLRMEYKDDATAGNGAKKAQFENKGRMNKAITLVIYRMLESKGVKTHLVADVDDINIDVKKVSILPLEVIVRNIAAGSFSRRMGVKEGTPFKKPIVEFSYKDDSLGDPFINDDYAREMNAATEEECVFLKNQARIVNDVLIDFFKQVGLTLVDFKIEFGRLAEDPSQIVLADEISPDTCRLWDIKTGEKMDKDRFRQDLGNVMEAYEEVLSRLQNKA</sequence>